<comment type="function">
    <text evidence="2">One of the essential components for the initiation of protein synthesis. Protects formylmethionyl-tRNA from spontaneous hydrolysis and promotes its binding to the 30S ribosomal subunits. Also involved in the hydrolysis of GTP during the formation of the 70S ribosomal complex.</text>
</comment>
<comment type="subcellular location">
    <subcellularLocation>
        <location evidence="2">Cytoplasm</location>
    </subcellularLocation>
</comment>
<comment type="similarity">
    <text evidence="2">Belongs to the TRAFAC class translation factor GTPase superfamily. Classic translation factor GTPase family. IF-2 subfamily.</text>
</comment>
<dbReference type="EMBL" id="BX571857">
    <property type="protein sequence ID" value="CAG42980.1"/>
    <property type="molecule type" value="Genomic_DNA"/>
</dbReference>
<dbReference type="RefSeq" id="WP_000043632.1">
    <property type="nucleotide sequence ID" value="NC_002953.3"/>
</dbReference>
<dbReference type="SMR" id="Q6G9U4"/>
<dbReference type="KEGG" id="sas:SAS1203"/>
<dbReference type="HOGENOM" id="CLU_006301_5_1_9"/>
<dbReference type="GO" id="GO:0005829">
    <property type="term" value="C:cytosol"/>
    <property type="evidence" value="ECO:0007669"/>
    <property type="project" value="TreeGrafter"/>
</dbReference>
<dbReference type="GO" id="GO:0005525">
    <property type="term" value="F:GTP binding"/>
    <property type="evidence" value="ECO:0007669"/>
    <property type="project" value="UniProtKB-KW"/>
</dbReference>
<dbReference type="GO" id="GO:0003924">
    <property type="term" value="F:GTPase activity"/>
    <property type="evidence" value="ECO:0007669"/>
    <property type="project" value="UniProtKB-UniRule"/>
</dbReference>
<dbReference type="GO" id="GO:0003743">
    <property type="term" value="F:translation initiation factor activity"/>
    <property type="evidence" value="ECO:0007669"/>
    <property type="project" value="UniProtKB-UniRule"/>
</dbReference>
<dbReference type="CDD" id="cd01887">
    <property type="entry name" value="IF2_eIF5B"/>
    <property type="match status" value="1"/>
</dbReference>
<dbReference type="CDD" id="cd03702">
    <property type="entry name" value="IF2_mtIF2_II"/>
    <property type="match status" value="1"/>
</dbReference>
<dbReference type="CDD" id="cd03692">
    <property type="entry name" value="mtIF2_IVc"/>
    <property type="match status" value="1"/>
</dbReference>
<dbReference type="FunFam" id="1.10.10.2480:FF:000002">
    <property type="entry name" value="Translation initiation factor IF-2"/>
    <property type="match status" value="1"/>
</dbReference>
<dbReference type="FunFam" id="2.40.30.10:FF:000007">
    <property type="entry name" value="Translation initiation factor IF-2"/>
    <property type="match status" value="1"/>
</dbReference>
<dbReference type="FunFam" id="2.40.30.10:FF:000008">
    <property type="entry name" value="Translation initiation factor IF-2"/>
    <property type="match status" value="1"/>
</dbReference>
<dbReference type="FunFam" id="3.40.50.10050:FF:000001">
    <property type="entry name" value="Translation initiation factor IF-2"/>
    <property type="match status" value="1"/>
</dbReference>
<dbReference type="FunFam" id="3.40.50.300:FF:000019">
    <property type="entry name" value="Translation initiation factor IF-2"/>
    <property type="match status" value="1"/>
</dbReference>
<dbReference type="Gene3D" id="1.10.10.2480">
    <property type="match status" value="1"/>
</dbReference>
<dbReference type="Gene3D" id="3.40.50.300">
    <property type="entry name" value="P-loop containing nucleotide triphosphate hydrolases"/>
    <property type="match status" value="1"/>
</dbReference>
<dbReference type="Gene3D" id="2.40.30.10">
    <property type="entry name" value="Translation factors"/>
    <property type="match status" value="2"/>
</dbReference>
<dbReference type="Gene3D" id="3.40.50.10050">
    <property type="entry name" value="Translation initiation factor IF- 2, domain 3"/>
    <property type="match status" value="1"/>
</dbReference>
<dbReference type="HAMAP" id="MF_00100_B">
    <property type="entry name" value="IF_2_B"/>
    <property type="match status" value="1"/>
</dbReference>
<dbReference type="InterPro" id="IPR053905">
    <property type="entry name" value="EF-G-like_DII"/>
</dbReference>
<dbReference type="InterPro" id="IPR044145">
    <property type="entry name" value="IF2_II"/>
</dbReference>
<dbReference type="InterPro" id="IPR006847">
    <property type="entry name" value="IF2_N"/>
</dbReference>
<dbReference type="InterPro" id="IPR027417">
    <property type="entry name" value="P-loop_NTPase"/>
</dbReference>
<dbReference type="InterPro" id="IPR005225">
    <property type="entry name" value="Small_GTP-bd"/>
</dbReference>
<dbReference type="InterPro" id="IPR000795">
    <property type="entry name" value="T_Tr_GTP-bd_dom"/>
</dbReference>
<dbReference type="InterPro" id="IPR000178">
    <property type="entry name" value="TF_IF2_bacterial-like"/>
</dbReference>
<dbReference type="InterPro" id="IPR015760">
    <property type="entry name" value="TIF_IF2"/>
</dbReference>
<dbReference type="InterPro" id="IPR023115">
    <property type="entry name" value="TIF_IF2_dom3"/>
</dbReference>
<dbReference type="InterPro" id="IPR036925">
    <property type="entry name" value="TIF_IF2_dom3_sf"/>
</dbReference>
<dbReference type="InterPro" id="IPR009000">
    <property type="entry name" value="Transl_B-barrel_sf"/>
</dbReference>
<dbReference type="NCBIfam" id="TIGR00487">
    <property type="entry name" value="IF-2"/>
    <property type="match status" value="1"/>
</dbReference>
<dbReference type="NCBIfam" id="TIGR00231">
    <property type="entry name" value="small_GTP"/>
    <property type="match status" value="1"/>
</dbReference>
<dbReference type="PANTHER" id="PTHR43381:SF5">
    <property type="entry name" value="TR-TYPE G DOMAIN-CONTAINING PROTEIN"/>
    <property type="match status" value="1"/>
</dbReference>
<dbReference type="PANTHER" id="PTHR43381">
    <property type="entry name" value="TRANSLATION INITIATION FACTOR IF-2-RELATED"/>
    <property type="match status" value="1"/>
</dbReference>
<dbReference type="Pfam" id="PF22042">
    <property type="entry name" value="EF-G_D2"/>
    <property type="match status" value="1"/>
</dbReference>
<dbReference type="Pfam" id="PF00009">
    <property type="entry name" value="GTP_EFTU"/>
    <property type="match status" value="1"/>
</dbReference>
<dbReference type="Pfam" id="PF11987">
    <property type="entry name" value="IF-2"/>
    <property type="match status" value="1"/>
</dbReference>
<dbReference type="Pfam" id="PF04760">
    <property type="entry name" value="IF2_N"/>
    <property type="match status" value="2"/>
</dbReference>
<dbReference type="SUPFAM" id="SSF52156">
    <property type="entry name" value="Initiation factor IF2/eIF5b, domain 3"/>
    <property type="match status" value="1"/>
</dbReference>
<dbReference type="SUPFAM" id="SSF52540">
    <property type="entry name" value="P-loop containing nucleoside triphosphate hydrolases"/>
    <property type="match status" value="1"/>
</dbReference>
<dbReference type="SUPFAM" id="SSF50447">
    <property type="entry name" value="Translation proteins"/>
    <property type="match status" value="2"/>
</dbReference>
<dbReference type="PROSITE" id="PS51722">
    <property type="entry name" value="G_TR_2"/>
    <property type="match status" value="1"/>
</dbReference>
<dbReference type="PROSITE" id="PS01176">
    <property type="entry name" value="IF2"/>
    <property type="match status" value="1"/>
</dbReference>
<evidence type="ECO:0000250" key="1"/>
<evidence type="ECO:0000255" key="2">
    <source>
        <dbReference type="HAMAP-Rule" id="MF_00100"/>
    </source>
</evidence>
<evidence type="ECO:0000256" key="3">
    <source>
        <dbReference type="SAM" id="MobiDB-lite"/>
    </source>
</evidence>
<keyword id="KW-0963">Cytoplasm</keyword>
<keyword id="KW-0342">GTP-binding</keyword>
<keyword id="KW-0396">Initiation factor</keyword>
<keyword id="KW-0547">Nucleotide-binding</keyword>
<keyword id="KW-0648">Protein biosynthesis</keyword>
<accession>Q6G9U4</accession>
<feature type="chain" id="PRO_0000137252" description="Translation initiation factor IF-2">
    <location>
        <begin position="1"/>
        <end position="705"/>
    </location>
</feature>
<feature type="domain" description="tr-type G">
    <location>
        <begin position="207"/>
        <end position="376"/>
    </location>
</feature>
<feature type="region of interest" description="Disordered" evidence="3">
    <location>
        <begin position="40"/>
        <end position="124"/>
    </location>
</feature>
<feature type="region of interest" description="G1" evidence="1">
    <location>
        <begin position="216"/>
        <end position="223"/>
    </location>
</feature>
<feature type="region of interest" description="G2" evidence="1">
    <location>
        <begin position="241"/>
        <end position="245"/>
    </location>
</feature>
<feature type="region of interest" description="G3" evidence="1">
    <location>
        <begin position="262"/>
        <end position="265"/>
    </location>
</feature>
<feature type="region of interest" description="G4" evidence="1">
    <location>
        <begin position="316"/>
        <end position="319"/>
    </location>
</feature>
<feature type="region of interest" description="G5" evidence="1">
    <location>
        <begin position="352"/>
        <end position="354"/>
    </location>
</feature>
<feature type="compositionally biased region" description="Basic and acidic residues" evidence="3">
    <location>
        <begin position="41"/>
        <end position="58"/>
    </location>
</feature>
<feature type="compositionally biased region" description="Low complexity" evidence="3">
    <location>
        <begin position="59"/>
        <end position="77"/>
    </location>
</feature>
<feature type="compositionally biased region" description="Basic residues" evidence="3">
    <location>
        <begin position="94"/>
        <end position="108"/>
    </location>
</feature>
<feature type="binding site" evidence="2">
    <location>
        <begin position="216"/>
        <end position="223"/>
    </location>
    <ligand>
        <name>GTP</name>
        <dbReference type="ChEBI" id="CHEBI:37565"/>
    </ligand>
</feature>
<feature type="binding site" evidence="2">
    <location>
        <begin position="262"/>
        <end position="266"/>
    </location>
    <ligand>
        <name>GTP</name>
        <dbReference type="ChEBI" id="CHEBI:37565"/>
    </ligand>
</feature>
<feature type="binding site" evidence="2">
    <location>
        <begin position="316"/>
        <end position="319"/>
    </location>
    <ligand>
        <name>GTP</name>
        <dbReference type="ChEBI" id="CHEBI:37565"/>
    </ligand>
</feature>
<gene>
    <name evidence="2" type="primary">infB</name>
    <name type="ordered locus">SAS1203</name>
</gene>
<proteinExistence type="inferred from homology"/>
<name>IF2_STAAS</name>
<organism>
    <name type="scientific">Staphylococcus aureus (strain MSSA476)</name>
    <dbReference type="NCBI Taxonomy" id="282459"/>
    <lineage>
        <taxon>Bacteria</taxon>
        <taxon>Bacillati</taxon>
        <taxon>Bacillota</taxon>
        <taxon>Bacilli</taxon>
        <taxon>Bacillales</taxon>
        <taxon>Staphylococcaceae</taxon>
        <taxon>Staphylococcus</taxon>
    </lineage>
</organism>
<sequence length="705" mass="77887">MSKQRIYEYAKELNLKSKEIIDELKSMNIEVSNHMQALEDDQIKALDKKFKKEQKNDNKQSTQNNHQKSNNQNQNKGQQKDNKKNQQQNNKGNKGNKKNNRNNKKNNKNNKPQNQPAAPKEIPSKVTYQEGITVGEFADKLNVESSEIIKKLFLLGIVANINQSLNQETIELIADDYGVEVEEEVVINEEDLSIYFEDEKDDPEAIERPAVVTIMGHVDHGKTTLLDSIRHTKVTAGEAGGITQHIGAYQIENDGKKITFLDTPGHAAFTTMRARGAQVTDITILVVAADDGVMPQTIEAINHAKEAEVPIIVAVNKIDKPTSNPDRVMQELTEYGLIPEDWGGETIFVPLSALSGDGIDDLLEMIGLVAEVQELKANPKNRAVGTVIEAELDKSRGPSASLLVQNGTLNVGDAIVVGNTYGRIRAMVNDLGQRIKMAGPSTPVEITGINDVPQAGDRFVVFSDEKQARRIGESRHEASIVQQRQESKNVSLDNLFEQMKQGEMKDLNVIIKGDVQGSVEALAASLMKIDVEGVNVRIIHTAVGAINESDVTLANASNGIIIGFNVRPDSGAKRAAEAENVDMRLHRVIYNVIEEIESAMKGLLDPEFEEQVIGQAEVRQTFKVSKVGTIAGCYVTEGKITRNAGVRIIRDGIVQYEGELDTLKRFKDDAKEVAKGYECGITIENYNDLKEGDVIEAFEMVEIKR</sequence>
<reference key="1">
    <citation type="journal article" date="2004" name="Proc. Natl. Acad. Sci. U.S.A.">
        <title>Complete genomes of two clinical Staphylococcus aureus strains: evidence for the rapid evolution of virulence and drug resistance.</title>
        <authorList>
            <person name="Holden M.T.G."/>
            <person name="Feil E.J."/>
            <person name="Lindsay J.A."/>
            <person name="Peacock S.J."/>
            <person name="Day N.P.J."/>
            <person name="Enright M.C."/>
            <person name="Foster T.J."/>
            <person name="Moore C.E."/>
            <person name="Hurst L."/>
            <person name="Atkin R."/>
            <person name="Barron A."/>
            <person name="Bason N."/>
            <person name="Bentley S.D."/>
            <person name="Chillingworth C."/>
            <person name="Chillingworth T."/>
            <person name="Churcher C."/>
            <person name="Clark L."/>
            <person name="Corton C."/>
            <person name="Cronin A."/>
            <person name="Doggett J."/>
            <person name="Dowd L."/>
            <person name="Feltwell T."/>
            <person name="Hance Z."/>
            <person name="Harris B."/>
            <person name="Hauser H."/>
            <person name="Holroyd S."/>
            <person name="Jagels K."/>
            <person name="James K.D."/>
            <person name="Lennard N."/>
            <person name="Line A."/>
            <person name="Mayes R."/>
            <person name="Moule S."/>
            <person name="Mungall K."/>
            <person name="Ormond D."/>
            <person name="Quail M.A."/>
            <person name="Rabbinowitsch E."/>
            <person name="Rutherford K.M."/>
            <person name="Sanders M."/>
            <person name="Sharp S."/>
            <person name="Simmonds M."/>
            <person name="Stevens K."/>
            <person name="Whitehead S."/>
            <person name="Barrell B.G."/>
            <person name="Spratt B.G."/>
            <person name="Parkhill J."/>
        </authorList>
    </citation>
    <scope>NUCLEOTIDE SEQUENCE [LARGE SCALE GENOMIC DNA]</scope>
    <source>
        <strain>MSSA476</strain>
    </source>
</reference>
<protein>
    <recommendedName>
        <fullName evidence="2">Translation initiation factor IF-2</fullName>
    </recommendedName>
</protein>